<organism>
    <name type="scientific">Staphylococcus aureus (strain JH1)</name>
    <dbReference type="NCBI Taxonomy" id="359787"/>
    <lineage>
        <taxon>Bacteria</taxon>
        <taxon>Bacillati</taxon>
        <taxon>Bacillota</taxon>
        <taxon>Bacilli</taxon>
        <taxon>Bacillales</taxon>
        <taxon>Staphylococcaceae</taxon>
        <taxon>Staphylococcus</taxon>
    </lineage>
</organism>
<gene>
    <name evidence="1" type="primary">hisG</name>
    <name type="ordered locus">SaurJH1_2760</name>
</gene>
<reference key="1">
    <citation type="submission" date="2007-06" db="EMBL/GenBank/DDBJ databases">
        <title>Complete sequence of chromosome of Staphylococcus aureus subsp. aureus JH1.</title>
        <authorList>
            <consortium name="US DOE Joint Genome Institute"/>
            <person name="Copeland A."/>
            <person name="Lucas S."/>
            <person name="Lapidus A."/>
            <person name="Barry K."/>
            <person name="Detter J.C."/>
            <person name="Glavina del Rio T."/>
            <person name="Hammon N."/>
            <person name="Israni S."/>
            <person name="Dalin E."/>
            <person name="Tice H."/>
            <person name="Pitluck S."/>
            <person name="Chain P."/>
            <person name="Malfatti S."/>
            <person name="Shin M."/>
            <person name="Vergez L."/>
            <person name="Schmutz J."/>
            <person name="Larimer F."/>
            <person name="Land M."/>
            <person name="Hauser L."/>
            <person name="Kyrpides N."/>
            <person name="Ivanova N."/>
            <person name="Tomasz A."/>
            <person name="Richardson P."/>
        </authorList>
    </citation>
    <scope>NUCLEOTIDE SEQUENCE [LARGE SCALE GENOMIC DNA]</scope>
    <source>
        <strain>JH1</strain>
    </source>
</reference>
<dbReference type="EC" id="2.4.2.17" evidence="1"/>
<dbReference type="EMBL" id="CP000736">
    <property type="protein sequence ID" value="ABR53582.1"/>
    <property type="molecule type" value="Genomic_DNA"/>
</dbReference>
<dbReference type="SMR" id="A6U564"/>
<dbReference type="KEGG" id="sah:SaurJH1_2760"/>
<dbReference type="HOGENOM" id="CLU_038115_2_0_9"/>
<dbReference type="UniPathway" id="UPA00031">
    <property type="reaction ID" value="UER00006"/>
</dbReference>
<dbReference type="GO" id="GO:0005737">
    <property type="term" value="C:cytoplasm"/>
    <property type="evidence" value="ECO:0007669"/>
    <property type="project" value="UniProtKB-SubCell"/>
</dbReference>
<dbReference type="GO" id="GO:0005524">
    <property type="term" value="F:ATP binding"/>
    <property type="evidence" value="ECO:0007669"/>
    <property type="project" value="UniProtKB-KW"/>
</dbReference>
<dbReference type="GO" id="GO:0003879">
    <property type="term" value="F:ATP phosphoribosyltransferase activity"/>
    <property type="evidence" value="ECO:0007669"/>
    <property type="project" value="UniProtKB-UniRule"/>
</dbReference>
<dbReference type="GO" id="GO:0000105">
    <property type="term" value="P:L-histidine biosynthetic process"/>
    <property type="evidence" value="ECO:0007669"/>
    <property type="project" value="UniProtKB-UniRule"/>
</dbReference>
<dbReference type="CDD" id="cd13595">
    <property type="entry name" value="PBP2_HisGs"/>
    <property type="match status" value="1"/>
</dbReference>
<dbReference type="FunFam" id="3.40.190.10:FF:000008">
    <property type="entry name" value="ATP phosphoribosyltransferase"/>
    <property type="match status" value="1"/>
</dbReference>
<dbReference type="Gene3D" id="3.40.190.10">
    <property type="entry name" value="Periplasmic binding protein-like II"/>
    <property type="match status" value="2"/>
</dbReference>
<dbReference type="HAMAP" id="MF_01018">
    <property type="entry name" value="HisG_Short"/>
    <property type="match status" value="1"/>
</dbReference>
<dbReference type="InterPro" id="IPR013820">
    <property type="entry name" value="ATP_PRibTrfase_cat"/>
</dbReference>
<dbReference type="InterPro" id="IPR001348">
    <property type="entry name" value="ATP_PRibTrfase_HisG"/>
</dbReference>
<dbReference type="InterPro" id="IPR024893">
    <property type="entry name" value="ATP_PRibTrfase_HisG_short"/>
</dbReference>
<dbReference type="NCBIfam" id="TIGR00070">
    <property type="entry name" value="hisG"/>
    <property type="match status" value="1"/>
</dbReference>
<dbReference type="PANTHER" id="PTHR21403:SF8">
    <property type="entry name" value="ATP PHOSPHORIBOSYLTRANSFERASE"/>
    <property type="match status" value="1"/>
</dbReference>
<dbReference type="PANTHER" id="PTHR21403">
    <property type="entry name" value="ATP PHOSPHORIBOSYLTRANSFERASE ATP-PRTASE"/>
    <property type="match status" value="1"/>
</dbReference>
<dbReference type="Pfam" id="PF01634">
    <property type="entry name" value="HisG"/>
    <property type="match status" value="1"/>
</dbReference>
<dbReference type="SUPFAM" id="SSF53850">
    <property type="entry name" value="Periplasmic binding protein-like II"/>
    <property type="match status" value="1"/>
</dbReference>
<comment type="function">
    <text evidence="1">Catalyzes the condensation of ATP and 5-phosphoribose 1-diphosphate to form N'-(5'-phosphoribosyl)-ATP (PR-ATP). Has a crucial role in the pathway because the rate of histidine biosynthesis seems to be controlled primarily by regulation of HisG enzymatic activity.</text>
</comment>
<comment type="catalytic activity">
    <reaction evidence="1">
        <text>1-(5-phospho-beta-D-ribosyl)-ATP + diphosphate = 5-phospho-alpha-D-ribose 1-diphosphate + ATP</text>
        <dbReference type="Rhea" id="RHEA:18473"/>
        <dbReference type="ChEBI" id="CHEBI:30616"/>
        <dbReference type="ChEBI" id="CHEBI:33019"/>
        <dbReference type="ChEBI" id="CHEBI:58017"/>
        <dbReference type="ChEBI" id="CHEBI:73183"/>
        <dbReference type="EC" id="2.4.2.17"/>
    </reaction>
</comment>
<comment type="pathway">
    <text evidence="1">Amino-acid biosynthesis; L-histidine biosynthesis; L-histidine from 5-phospho-alpha-D-ribose 1-diphosphate: step 1/9.</text>
</comment>
<comment type="subunit">
    <text evidence="1">Heteromultimer composed of HisG and HisZ subunits.</text>
</comment>
<comment type="subcellular location">
    <subcellularLocation>
        <location evidence="1">Cytoplasm</location>
    </subcellularLocation>
</comment>
<comment type="domain">
    <text>Lacks the C-terminal regulatory region which is replaced by HisZ.</text>
</comment>
<comment type="similarity">
    <text evidence="1">Belongs to the ATP phosphoribosyltransferase family. Short subfamily.</text>
</comment>
<evidence type="ECO:0000255" key="1">
    <source>
        <dbReference type="HAMAP-Rule" id="MF_01018"/>
    </source>
</evidence>
<keyword id="KW-0028">Amino-acid biosynthesis</keyword>
<keyword id="KW-0067">ATP-binding</keyword>
<keyword id="KW-0963">Cytoplasm</keyword>
<keyword id="KW-0328">Glycosyltransferase</keyword>
<keyword id="KW-0368">Histidine biosynthesis</keyword>
<keyword id="KW-0547">Nucleotide-binding</keyword>
<keyword id="KW-0808">Transferase</keyword>
<accession>A6U564</accession>
<proteinExistence type="inferred from homology"/>
<protein>
    <recommendedName>
        <fullName evidence="1">ATP phosphoribosyltransferase</fullName>
        <shortName evidence="1">ATP-PRT</shortName>
        <shortName evidence="1">ATP-PRTase</shortName>
        <ecNumber evidence="1">2.4.2.17</ecNumber>
    </recommendedName>
</protein>
<name>HIS1_STAA2</name>
<feature type="chain" id="PRO_1000084161" description="ATP phosphoribosyltransferase">
    <location>
        <begin position="1"/>
        <end position="204"/>
    </location>
</feature>
<sequence>MLRIAIAKGRLMDSLINYLDVIEYTTLSETLKNRERQLLLSVDNIECILVKGSDVPIYVEQGMADIGIVGSDILDERQYNVNNLLNMPFGACHFAVAAKPETTNYRKIATSYVHTAETYFKSKGIDVELIKLNGSVELACVVDMVDGIVDIVQTGTTLKANGLVEKQHISDINARLITNKAAYFKKSQLIEQFIRSLEVSIANA</sequence>